<proteinExistence type="evidence at transcript level"/>
<protein>
    <recommendedName>
        <fullName>WUSCHEL-related homeobox 1</fullName>
    </recommendedName>
    <alternativeName>
        <fullName>PFS2-like protein</fullName>
    </alternativeName>
</protein>
<organism>
    <name type="scientific">Arabidopsis thaliana</name>
    <name type="common">Mouse-ear cress</name>
    <dbReference type="NCBI Taxonomy" id="3702"/>
    <lineage>
        <taxon>Eukaryota</taxon>
        <taxon>Viridiplantae</taxon>
        <taxon>Streptophyta</taxon>
        <taxon>Embryophyta</taxon>
        <taxon>Tracheophyta</taxon>
        <taxon>Spermatophyta</taxon>
        <taxon>Magnoliopsida</taxon>
        <taxon>eudicotyledons</taxon>
        <taxon>Gunneridae</taxon>
        <taxon>Pentapetalae</taxon>
        <taxon>rosids</taxon>
        <taxon>malvids</taxon>
        <taxon>Brassicales</taxon>
        <taxon>Brassicaceae</taxon>
        <taxon>Camelineae</taxon>
        <taxon>Arabidopsis</taxon>
    </lineage>
</organism>
<reference key="1">
    <citation type="journal article" date="2004" name="Development">
        <title>Expression dynamics of WOX genes mark cell fate decisions during early embryonic patterning in Arabidopsis thaliana.</title>
        <authorList>
            <person name="Haecker A."/>
            <person name="Gross-Hardt R."/>
            <person name="Geiges B."/>
            <person name="Sarkar A."/>
            <person name="Breuninger H."/>
            <person name="Herrmann M."/>
            <person name="Laux T."/>
        </authorList>
    </citation>
    <scope>NUCLEOTIDE SEQUENCE [MRNA]</scope>
    <scope>DEVELOPMENTAL STAGE</scope>
    <source>
        <strain>cv. Landsberg erecta</strain>
    </source>
</reference>
<reference key="2">
    <citation type="journal article" date="2000" name="DNA Res.">
        <title>Structural analysis of Arabidopsis thaliana chromosome 3. I. Sequence features of the regions of 4,504,864 bp covered by sixty P1 and TAC clones.</title>
        <authorList>
            <person name="Sato S."/>
            <person name="Nakamura Y."/>
            <person name="Kaneko T."/>
            <person name="Katoh T."/>
            <person name="Asamizu E."/>
            <person name="Tabata S."/>
        </authorList>
    </citation>
    <scope>NUCLEOTIDE SEQUENCE [LARGE SCALE GENOMIC DNA]</scope>
    <source>
        <strain>cv. Columbia</strain>
    </source>
</reference>
<reference key="3">
    <citation type="journal article" date="2017" name="Plant J.">
        <title>Araport11: a complete reannotation of the Arabidopsis thaliana reference genome.</title>
        <authorList>
            <person name="Cheng C.Y."/>
            <person name="Krishnakumar V."/>
            <person name="Chan A.P."/>
            <person name="Thibaud-Nissen F."/>
            <person name="Schobel S."/>
            <person name="Town C.D."/>
        </authorList>
    </citation>
    <scope>GENOME REANNOTATION</scope>
    <source>
        <strain>cv. Columbia</strain>
    </source>
</reference>
<comment type="function">
    <text evidence="1">Transcription factor which may be involved in developmental processes.</text>
</comment>
<comment type="subcellular location">
    <subcellularLocation>
        <location evidence="2">Nucleus</location>
    </subcellularLocation>
</comment>
<comment type="developmental stage">
    <text evidence="4">Specifically expressed during initiation of the shoot apical meristem, when cotyledonary primordia arise at the flanks of the apical embryo domain phase. Confined to the initiating vascular primordium of the cotyledons during heart and torpedo stages, but only weakly expressed during bent cotyledon stage.</text>
</comment>
<comment type="similarity">
    <text evidence="5">Belongs to the WUS homeobox family.</text>
</comment>
<feature type="chain" id="PRO_0000049365" description="WUSCHEL-related homeobox 1">
    <location>
        <begin position="1"/>
        <end position="350"/>
    </location>
</feature>
<feature type="DNA-binding region" description="Homeobox; WUS-type" evidence="2">
    <location>
        <begin position="72"/>
        <end position="136"/>
    </location>
</feature>
<feature type="region of interest" description="Disordered" evidence="3">
    <location>
        <begin position="283"/>
        <end position="308"/>
    </location>
</feature>
<feature type="sequence conflict" description="In Ref. 1; AAP37133." evidence="5" ref="1">
    <original>A</original>
    <variation>T</variation>
    <location>
        <position position="152"/>
    </location>
</feature>
<feature type="sequence conflict" description="In Ref. 1; AAP37133." evidence="5" ref="1">
    <original>V</original>
    <variation>A</variation>
    <location>
        <position position="173"/>
    </location>
</feature>
<feature type="sequence conflict" description="In Ref. 1; AAP37133." evidence="5" ref="1">
    <location>
        <position position="248"/>
    </location>
</feature>
<evidence type="ECO:0000250" key="1"/>
<evidence type="ECO:0000255" key="2">
    <source>
        <dbReference type="PROSITE-ProRule" id="PRU00108"/>
    </source>
</evidence>
<evidence type="ECO:0000256" key="3">
    <source>
        <dbReference type="SAM" id="MobiDB-lite"/>
    </source>
</evidence>
<evidence type="ECO:0000269" key="4">
    <source>
    </source>
</evidence>
<evidence type="ECO:0000305" key="5"/>
<dbReference type="EMBL" id="AY251394">
    <property type="protein sequence ID" value="AAP37133.1"/>
    <property type="molecule type" value="mRNA"/>
</dbReference>
<dbReference type="EMBL" id="AB019230">
    <property type="protein sequence ID" value="BAB02721.1"/>
    <property type="molecule type" value="Genomic_DNA"/>
</dbReference>
<dbReference type="EMBL" id="CP002686">
    <property type="protein sequence ID" value="AEE76034.1"/>
    <property type="molecule type" value="Genomic_DNA"/>
</dbReference>
<dbReference type="RefSeq" id="NP_188428.3">
    <property type="nucleotide sequence ID" value="NM_112682.4"/>
</dbReference>
<dbReference type="SMR" id="Q6X7K0"/>
<dbReference type="BioGRID" id="6658">
    <property type="interactions" value="5"/>
</dbReference>
<dbReference type="FunCoup" id="Q6X7K0">
    <property type="interactions" value="154"/>
</dbReference>
<dbReference type="IntAct" id="Q6X7K0">
    <property type="interactions" value="4"/>
</dbReference>
<dbReference type="STRING" id="3702.Q6X7K0"/>
<dbReference type="PaxDb" id="3702-AT3G18010.1"/>
<dbReference type="EnsemblPlants" id="AT3G18010.1">
    <property type="protein sequence ID" value="AT3G18010.1"/>
    <property type="gene ID" value="AT3G18010"/>
</dbReference>
<dbReference type="GeneID" id="821325"/>
<dbReference type="Gramene" id="AT3G18010.1">
    <property type="protein sequence ID" value="AT3G18010.1"/>
    <property type="gene ID" value="AT3G18010"/>
</dbReference>
<dbReference type="KEGG" id="ath:AT3G18010"/>
<dbReference type="Araport" id="AT3G18010"/>
<dbReference type="TAIR" id="AT3G18010">
    <property type="gene designation" value="WOX1"/>
</dbReference>
<dbReference type="eggNOG" id="ENOG502QVAV">
    <property type="taxonomic scope" value="Eukaryota"/>
</dbReference>
<dbReference type="HOGENOM" id="CLU_777096_0_0_1"/>
<dbReference type="InParanoid" id="Q6X7K0"/>
<dbReference type="OMA" id="DDNCVES"/>
<dbReference type="OrthoDB" id="1918181at2759"/>
<dbReference type="PhylomeDB" id="Q6X7K0"/>
<dbReference type="PRO" id="PR:Q6X7K0"/>
<dbReference type="Proteomes" id="UP000006548">
    <property type="component" value="Chromosome 3"/>
</dbReference>
<dbReference type="ExpressionAtlas" id="Q6X7K0">
    <property type="expression patterns" value="baseline and differential"/>
</dbReference>
<dbReference type="GO" id="GO:0005634">
    <property type="term" value="C:nucleus"/>
    <property type="evidence" value="ECO:0007669"/>
    <property type="project" value="UniProtKB-SubCell"/>
</dbReference>
<dbReference type="GO" id="GO:0003677">
    <property type="term" value="F:DNA binding"/>
    <property type="evidence" value="ECO:0007669"/>
    <property type="project" value="UniProtKB-KW"/>
</dbReference>
<dbReference type="GO" id="GO:0003700">
    <property type="term" value="F:DNA-binding transcription factor activity"/>
    <property type="evidence" value="ECO:0000250"/>
    <property type="project" value="TAIR"/>
</dbReference>
<dbReference type="GO" id="GO:0099402">
    <property type="term" value="P:plant organ development"/>
    <property type="evidence" value="ECO:0000316"/>
    <property type="project" value="TAIR"/>
</dbReference>
<dbReference type="CDD" id="cd00086">
    <property type="entry name" value="homeodomain"/>
    <property type="match status" value="1"/>
</dbReference>
<dbReference type="FunFam" id="1.10.10.60:FF:000146">
    <property type="entry name" value="WUSCHEL-related homeobox 4"/>
    <property type="match status" value="1"/>
</dbReference>
<dbReference type="Gene3D" id="1.10.10.60">
    <property type="entry name" value="Homeodomain-like"/>
    <property type="match status" value="1"/>
</dbReference>
<dbReference type="InterPro" id="IPR001356">
    <property type="entry name" value="HD"/>
</dbReference>
<dbReference type="InterPro" id="IPR009057">
    <property type="entry name" value="Homeodomain-like_sf"/>
</dbReference>
<dbReference type="InterPro" id="IPR044555">
    <property type="entry name" value="WUSCHEL-like"/>
</dbReference>
<dbReference type="PANTHER" id="PTHR45940:SF13">
    <property type="entry name" value="WUSCHEL-RELATED HOMEOBOX 1"/>
    <property type="match status" value="1"/>
</dbReference>
<dbReference type="PANTHER" id="PTHR45940">
    <property type="entry name" value="WUSCHEL-RELATED HOMEOBOX 1-RELATED"/>
    <property type="match status" value="1"/>
</dbReference>
<dbReference type="Pfam" id="PF00046">
    <property type="entry name" value="Homeodomain"/>
    <property type="match status" value="1"/>
</dbReference>
<dbReference type="SMART" id="SM00389">
    <property type="entry name" value="HOX"/>
    <property type="match status" value="1"/>
</dbReference>
<dbReference type="SUPFAM" id="SSF46689">
    <property type="entry name" value="Homeodomain-like"/>
    <property type="match status" value="1"/>
</dbReference>
<dbReference type="PROSITE" id="PS50071">
    <property type="entry name" value="HOMEOBOX_2"/>
    <property type="match status" value="1"/>
</dbReference>
<gene>
    <name type="primary">WOX1</name>
    <name type="ordered locus">At3g18010</name>
    <name type="ORF">MEB5.20</name>
    <name type="ORF">MEB5.23</name>
</gene>
<keyword id="KW-0217">Developmental protein</keyword>
<keyword id="KW-0238">DNA-binding</keyword>
<keyword id="KW-0371">Homeobox</keyword>
<keyword id="KW-0539">Nucleus</keyword>
<keyword id="KW-1185">Reference proteome</keyword>
<keyword id="KW-0804">Transcription</keyword>
<keyword id="KW-0805">Transcription regulation</keyword>
<sequence length="350" mass="40143">MWTMGYNEGGADSFNGGRKLRPLIPRLTSCPTAAVNTNSDHRFNMAVVTMTAEQNKRELMMLNSEPQHPPVMVSSRWNPTPDQLRVLEELYRQGTRTPSADHIQQITAQLRRYGKIEGKNVFYWFQNHKARERQKRRRQMETGHEETVLSTASLVSNHGFDKKDPPGYKVEQVKNWICSVGCDTQPEKPSRDYHLEEPANIRVEHNARCGGDERRSFLGINTTWQMMQLPPSFYSSSHHHHQRNLILNSPTVSSNMSNSNNAVSASKDTVTVSPVFLRTREATNTETCHRNGDDNKDQEQHEDCSNGELDHQEQTLELFPLRKEGFCSDGEKDKNISGIHCFYEFLPLKN</sequence>
<name>WOX1_ARATH</name>
<accession>Q6X7K0</accession>
<accession>Q9LVH2</accession>